<organism>
    <name type="scientific">Armillaria ostoyae</name>
    <name type="common">Armillaria root rot fungus</name>
    <dbReference type="NCBI Taxonomy" id="47428"/>
    <lineage>
        <taxon>Eukaryota</taxon>
        <taxon>Fungi</taxon>
        <taxon>Dikarya</taxon>
        <taxon>Basidiomycota</taxon>
        <taxon>Agaricomycotina</taxon>
        <taxon>Agaricomycetes</taxon>
        <taxon>Agaricomycetidae</taxon>
        <taxon>Agaricales</taxon>
        <taxon>Marasmiineae</taxon>
        <taxon>Physalacriaceae</taxon>
        <taxon>Armillaria</taxon>
    </lineage>
</organism>
<gene>
    <name evidence="3" type="primary">PRO1</name>
    <name type="ORF">ARMOST_13672</name>
</gene>
<sequence length="342" mass="39384">MSQRIFLPDTLANWQWPRHLNPHYAEVKKASAAWAQSFRAFQTKAQEAFDRCDFNLLASFAYPLADEGDGCDLMNLFFVIDEYSDVSTEEEVRAQKDIVMDAIRNTEKPRPAGEWIGGEVARQFWDLAKKTASSQAQKRFIDTFDEYLESVVQQAADRNNSHIRGIESYLEVRRCTIGAKPSFALLEFDMQLPDEVINHPVIKELEKSCIDMLCLGNDVVSYNLEQARDDDGHNIVTIAMNELRTDVAGAMIWVDEYHKQLESRFMENFKKVPRWGGPIDLQVARYCDGLGNWVRANDQWSFESERYFGKKGPEIIQRRWITLMPKMVSEELGPQIVDGSHL</sequence>
<name>PRO1_ARMOS</name>
<protein>
    <recommendedName>
        <fullName evidence="3">Delta(6)-protoilludene synthase</fullName>
        <ecNumber evidence="3">4.2.3.135</ecNumber>
    </recommendedName>
    <alternativeName>
        <fullName evidence="3">Melleolides biosynthesis cluster protein PRO1</fullName>
    </alternativeName>
</protein>
<dbReference type="EC" id="4.2.3.135" evidence="3"/>
<dbReference type="EMBL" id="FUEG01000012">
    <property type="protein sequence ID" value="SJL10288.1"/>
    <property type="molecule type" value="Genomic_DNA"/>
</dbReference>
<dbReference type="SMR" id="A0A284RNH4"/>
<dbReference type="OMA" id="ESRFMEN"/>
<dbReference type="OrthoDB" id="6486656at2759"/>
<dbReference type="Proteomes" id="UP000219338">
    <property type="component" value="Unassembled WGS sequence"/>
</dbReference>
<dbReference type="GO" id="GO:0046872">
    <property type="term" value="F:metal ion binding"/>
    <property type="evidence" value="ECO:0007669"/>
    <property type="project" value="UniProtKB-KW"/>
</dbReference>
<dbReference type="GO" id="GO:0010333">
    <property type="term" value="F:terpene synthase activity"/>
    <property type="evidence" value="ECO:0007669"/>
    <property type="project" value="InterPro"/>
</dbReference>
<dbReference type="GO" id="GO:0008299">
    <property type="term" value="P:isoprenoid biosynthetic process"/>
    <property type="evidence" value="ECO:0007669"/>
    <property type="project" value="UniProtKB-ARBA"/>
</dbReference>
<dbReference type="Gene3D" id="1.10.600.10">
    <property type="entry name" value="Farnesyl Diphosphate Synthase"/>
    <property type="match status" value="1"/>
</dbReference>
<dbReference type="InterPro" id="IPR008949">
    <property type="entry name" value="Isoprenoid_synthase_dom_sf"/>
</dbReference>
<dbReference type="InterPro" id="IPR034686">
    <property type="entry name" value="Terpene_cyclase-like_2"/>
</dbReference>
<dbReference type="PANTHER" id="PTHR35201:SF4">
    <property type="entry name" value="BETA-PINACENE SYNTHASE-RELATED"/>
    <property type="match status" value="1"/>
</dbReference>
<dbReference type="PANTHER" id="PTHR35201">
    <property type="entry name" value="TERPENE SYNTHASE"/>
    <property type="match status" value="1"/>
</dbReference>
<dbReference type="Pfam" id="PF19086">
    <property type="entry name" value="Terpene_syn_C_2"/>
    <property type="match status" value="1"/>
</dbReference>
<dbReference type="SFLD" id="SFLDS00005">
    <property type="entry name" value="Isoprenoid_Synthase_Type_I"/>
    <property type="match status" value="1"/>
</dbReference>
<dbReference type="SFLD" id="SFLDG01020">
    <property type="entry name" value="Terpene_Cyclase_Like_2"/>
    <property type="match status" value="1"/>
</dbReference>
<dbReference type="SUPFAM" id="SSF48576">
    <property type="entry name" value="Terpenoid synthases"/>
    <property type="match status" value="1"/>
</dbReference>
<reference key="1">
    <citation type="journal article" date="2017" name="Nat. Ecol. Evol.">
        <title>Genome expansion and lineage-specific genetic innovations in the forest pathogenic fungi Armillaria.</title>
        <authorList>
            <person name="Sipos G."/>
            <person name="Prasanna A.N."/>
            <person name="Walter M.C."/>
            <person name="O'Connor E."/>
            <person name="Balint B."/>
            <person name="Krizsan K."/>
            <person name="Kiss B."/>
            <person name="Hess J."/>
            <person name="Varga T."/>
            <person name="Slot J."/>
            <person name="Riley R."/>
            <person name="Boka B."/>
            <person name="Rigling D."/>
            <person name="Barry K."/>
            <person name="Lee J."/>
            <person name="Mihaltcheva S."/>
            <person name="LaButti K."/>
            <person name="Lipzen A."/>
            <person name="Waldron R."/>
            <person name="Moloney N.M."/>
            <person name="Sperisen C."/>
            <person name="Kredics L."/>
            <person name="Vagvoelgyi C."/>
            <person name="Patrignani A."/>
            <person name="Fitzpatrick D."/>
            <person name="Nagy I."/>
            <person name="Doyle S."/>
            <person name="Anderson J.B."/>
            <person name="Grigoriev I.V."/>
            <person name="Gueldener U."/>
            <person name="Muensterkoetter M."/>
            <person name="Nagy L.G."/>
        </authorList>
    </citation>
    <scope>NUCLEOTIDE SEQUENCE [LARGE SCALE GENOMIC DNA]</scope>
    <source>
        <strain>C18/9</strain>
    </source>
</reference>
<reference key="2">
    <citation type="journal article" date="2011" name="Bioorg. Med. Chem. Lett.">
        <title>In vitro cytotoxicity of melleolide antibiotics: structural and mechanistic aspects.</title>
        <authorList>
            <person name="Bohnert M."/>
            <person name="Miethbauer S."/>
            <person name="Dahse H.M."/>
            <person name="Ziemen J."/>
            <person name="Nett M."/>
            <person name="Hoffmeister D."/>
        </authorList>
    </citation>
    <scope>BIOTECHNOLOGY</scope>
</reference>
<reference key="3">
    <citation type="journal article" date="2013" name="Evid. Based Complement Alternat. Med.">
        <title>Therapeutic and radiosensitizing effects of armillaridin on human esophageal cancer cells.</title>
        <authorList>
            <person name="Chi C.W."/>
            <person name="Chen C.C."/>
            <person name="Chen Y.J."/>
        </authorList>
    </citation>
    <scope>BIOTECHNOLOGY</scope>
</reference>
<reference key="4">
    <citation type="journal article" date="2015" name="Int. J. Med. Mushrooms">
        <title>Armillaridin, a honey medicinal mushroom, Armillaria mellea (higher basidiomycetes) component, inhibits differentiation and activation of human macrophages.</title>
        <authorList>
            <person name="Liu T.P."/>
            <person name="Chen C.C."/>
            <person name="Shiao P.Y."/>
            <person name="Shieh H.R."/>
            <person name="Chen Y.Y."/>
            <person name="Chen Y.J."/>
        </authorList>
    </citation>
    <scope>BIOTECHNOLOGY</scope>
</reference>
<reference key="5">
    <citation type="journal article" date="2016" name="J. Ethnopharmacol.">
        <title>Structure, cytotoxic activity and mechanism of protoilludane sesquiterpene aryl esters from the mycelium of Armillaria mellea.</title>
        <authorList>
            <person name="Li Z."/>
            <person name="Wang Y."/>
            <person name="Jiang B."/>
            <person name="Li W."/>
            <person name="Zheng L."/>
            <person name="Yang X."/>
            <person name="Bao Y."/>
            <person name="Sun L."/>
            <person name="Huang Y."/>
            <person name="Li Y."/>
        </authorList>
    </citation>
    <scope>BIOTECHNOLOGY</scope>
</reference>
<reference key="6">
    <citation type="journal article" date="2016" name="Tumor Biol.">
        <title>Armillaridin induces autophagy-associated cell death in human chronic myelogenous leukemia K562 cells.</title>
        <authorList>
            <person name="Chang W.H."/>
            <person name="Huang H.L."/>
            <person name="Huang W.P."/>
            <person name="Chen C.C."/>
            <person name="Chen Y.J."/>
        </authorList>
    </citation>
    <scope>BIOTECHNOLOGY</scope>
</reference>
<reference key="7">
    <citation type="journal article" date="2018" name="Curr. Biol.">
        <title>Armillaria.</title>
        <authorList>
            <person name="Sipos G."/>
            <person name="Anderson J.B."/>
            <person name="Nagy L.G."/>
        </authorList>
    </citation>
    <scope>MISCELLANEOUS</scope>
</reference>
<reference key="8">
    <citation type="journal article" date="2019" name="Am. J. Chin. Med.">
        <title>Induction of autophagic death of human hepatocellular carcinoma cells by armillaridin from Armillaria mellea.</title>
        <authorList>
            <person name="Leu Y.S."/>
            <person name="Chen Y.J."/>
            <person name="Chen C.C."/>
            <person name="Huang H.L."/>
        </authorList>
    </citation>
    <scope>BIOTECHNOLOGY</scope>
</reference>
<reference key="9">
    <citation type="journal article" date="2020" name="Plant Dis.">
        <title>Susceptibility of garden trees and shrubs to Armillaria root rot.</title>
        <authorList>
            <person name="Cromey M.G."/>
            <person name="Drakulic J."/>
            <person name="Beal E.J."/>
            <person name="Waghorn I.A.G."/>
            <person name="Perry J.N."/>
            <person name="Clover G.R.G."/>
        </authorList>
    </citation>
    <scope>MISCELLANEOUS</scope>
</reference>
<feature type="chain" id="PRO_0000449400" description="Delta(6)-protoilludene synthase">
    <location>
        <begin position="1"/>
        <end position="342"/>
    </location>
</feature>
<feature type="short sequence motif" description="DDXXD motif" evidence="3">
    <location>
        <begin position="81"/>
        <end position="85"/>
    </location>
</feature>
<feature type="binding site" evidence="4">
    <location>
        <position position="81"/>
    </location>
    <ligand>
        <name>Mg(2+)</name>
        <dbReference type="ChEBI" id="CHEBI:18420"/>
        <label>1</label>
    </ligand>
</feature>
<feature type="binding site" evidence="4">
    <location>
        <position position="81"/>
    </location>
    <ligand>
        <name>Mg(2+)</name>
        <dbReference type="ChEBI" id="CHEBI:18420"/>
        <label>2</label>
    </ligand>
</feature>
<feature type="binding site" evidence="4">
    <location>
        <position position="217"/>
    </location>
    <ligand>
        <name>Mg(2+)</name>
        <dbReference type="ChEBI" id="CHEBI:18420"/>
        <label>3</label>
    </ligand>
</feature>
<feature type="binding site" evidence="4">
    <location>
        <position position="221"/>
    </location>
    <ligand>
        <name>Mg(2+)</name>
        <dbReference type="ChEBI" id="CHEBI:18420"/>
        <label>3</label>
    </ligand>
</feature>
<feature type="binding site" evidence="4">
    <location>
        <position position="225"/>
    </location>
    <ligand>
        <name>Mg(2+)</name>
        <dbReference type="ChEBI" id="CHEBI:18420"/>
        <label>3</label>
    </ligand>
</feature>
<feature type="binding site" evidence="4">
    <location>
        <position position="306"/>
    </location>
    <ligand>
        <name>(2E,6E)-farnesyl diphosphate</name>
        <dbReference type="ChEBI" id="CHEBI:175763"/>
    </ligand>
</feature>
<feature type="binding site" evidence="4">
    <location>
        <position position="307"/>
    </location>
    <ligand>
        <name>(2E,6E)-farnesyl diphosphate</name>
        <dbReference type="ChEBI" id="CHEBI:175763"/>
    </ligand>
</feature>
<proteinExistence type="evidence at protein level"/>
<keyword id="KW-0456">Lyase</keyword>
<keyword id="KW-0460">Magnesium</keyword>
<keyword id="KW-0479">Metal-binding</keyword>
<keyword id="KW-1185">Reference proteome</keyword>
<keyword id="KW-0843">Virulence</keyword>
<comment type="function">
    <text evidence="1 2">Delta(6)-protoilludene synthase, part of the gene cluster that mediates the biosynthesis of melleolides, a range of antifungal and phytotoxic polyketide derivatives composed of an orsellinic acid (OA) moiety esterified to various sesquiterpene alcohols (By similarity). The first step in melleolides biosynthesis is performed by the delta(6)-protoilludene synthase PRO1 which catalyzes the cyclization of farnesyl diphosphate to protoilludene (By similarity). The orsellinic acid synthase armB produces OA by condensing acetyl-CoA with 3 malonyl-CoA units in a three-round chain elongation reaction folowed by a C2-C7 ring closure (By similarity). ArmB further catalyzes the trans-esterification of OA to the various sesquiterpene alcohols resulting from the hydroxylation of protoilludene (By similarity). The melleolides cluster also includes 5 cytochrome P450 monooxygenases, 4 NAD(+)-dependent oxidoreductases, one flavin-dependent oxidoreductase, and one O-methyltransferase (By similarity). The cytochrome P450 monooxygenases may be involved in protoilludene hydroxylation to elaborate melleolides with multiple alcohol groups, such as melleolide D, which carries alcohol functionalities at C-4, C-5, C-10, and C-13 (By similarity). The role of the NAD(+)-dependent enzymes remains unknown (By similarity). Numerous melleolides, including arnamial, show 5'-O-methylation of the aromatic moiety which may be catalyzed by the methyltransferase encoded in the cluster (By similarity). The flavin-dependent oxidoreductase might represent the dehydrogenase yielding the aldehyde in position 1 of arnamial and other melleolides (By similarity). Finally, several halogenases, localized outside of the cluster, are able to catalyze the transfer of a single chlorine atom to the melleolide backbone, resulting in a 6'-chloromelleolide product (By similarity).</text>
</comment>
<comment type="catalytic activity">
    <reaction evidence="2">
        <text>(2E,6E)-farnesyl diphosphate = Delta(6)-protoilludene + diphosphate</text>
        <dbReference type="Rhea" id="RHEA:34695"/>
        <dbReference type="ChEBI" id="CHEBI:33019"/>
        <dbReference type="ChEBI" id="CHEBI:68655"/>
        <dbReference type="ChEBI" id="CHEBI:175763"/>
        <dbReference type="EC" id="4.2.3.135"/>
    </reaction>
</comment>
<comment type="cofactor">
    <cofactor evidence="2">
        <name>Mg(2+)</name>
        <dbReference type="ChEBI" id="CHEBI:18420"/>
    </cofactor>
</comment>
<comment type="biotechnology">
    <text evidence="5 6 7 8 9 10">Melleolide sesquiterpene aryl esters are cytotoxic secondary products with anti-cancer potential (PubMed:21376582, PubMed:26952552). Armillaridin shows therapeutic and radiosensitizing effects on human esophageal cancer cells (PubMed:23864890). Armillaridin induces autophagy-associated cell death in human chronic myelogenous leukemia as well as of hepatocellular carcinoma cells (PubMed:27592257, PubMed:31488037). Armillaridin can also inhibit the differentiation and activation of human macrophages and thus might have potential to be developed as a biological response modifier for inflammatory diseases (PubMed:25746621).</text>
</comment>
<comment type="miscellaneous">
    <text evidence="11 12 13">Armillaria species are both devastating forest pathogens and some of the largest and oldest terrestrial organisms on Earth (Probable) (PubMed:31746694). They forage for hosts and achieve immense colony sizes via rhizomorphs, root-like multicellular structures of clonal dispersal (Probable). An A.ostoyae colony, known as the 'humongous fungus' in the Malheur National Forest in the Strawberry Mountains of eastern Oregon, was found to be the largest fungal colony in the world, spanning an area of 9.1 square kilometers (Probable). This organism is estimated to be some 8,000 years old and may weigh as much as 35,000 tons (Probable).</text>
</comment>
<comment type="similarity">
    <text evidence="12">Belongs to the terpene synthase family.</text>
</comment>
<evidence type="ECO:0000250" key="1">
    <source>
        <dbReference type="UniProtKB" id="A0A2H3CTK0"/>
    </source>
</evidence>
<evidence type="ECO:0000250" key="2">
    <source>
        <dbReference type="UniProtKB" id="I3ZNU9"/>
    </source>
</evidence>
<evidence type="ECO:0000250" key="3">
    <source>
        <dbReference type="UniProtKB" id="P0DL13"/>
    </source>
</evidence>
<evidence type="ECO:0000250" key="4">
    <source>
        <dbReference type="UniProtKB" id="Q9UR08"/>
    </source>
</evidence>
<evidence type="ECO:0000269" key="5">
    <source>
    </source>
</evidence>
<evidence type="ECO:0000269" key="6">
    <source>
    </source>
</evidence>
<evidence type="ECO:0000269" key="7">
    <source>
    </source>
</evidence>
<evidence type="ECO:0000269" key="8">
    <source>
    </source>
</evidence>
<evidence type="ECO:0000269" key="9">
    <source>
    </source>
</evidence>
<evidence type="ECO:0000269" key="10">
    <source>
    </source>
</evidence>
<evidence type="ECO:0000269" key="11">
    <source>
    </source>
</evidence>
<evidence type="ECO:0000305" key="12"/>
<evidence type="ECO:0000305" key="13">
    <source>
    </source>
</evidence>
<accession>A0A284RNH4</accession>